<protein>
    <recommendedName>
        <fullName evidence="1 4">LL-diaminopimelate aminotransferase</fullName>
        <shortName evidence="1 4">DAP-AT</shortName>
        <shortName evidence="1 4">DAP-aminotransferase</shortName>
        <shortName evidence="1 4">LL-DAP-aminotransferase</shortName>
        <ecNumber evidence="1 2 3">2.6.1.83</ecNumber>
    </recommendedName>
</protein>
<keyword id="KW-0032">Aminotransferase</keyword>
<keyword id="KW-0663">Pyridoxal phosphate</keyword>
<keyword id="KW-1185">Reference proteome</keyword>
<keyword id="KW-0808">Transferase</keyword>
<evidence type="ECO:0000255" key="1">
    <source>
        <dbReference type="HAMAP-Rule" id="MF_01642"/>
    </source>
</evidence>
<evidence type="ECO:0000269" key="2">
    <source>
    </source>
</evidence>
<evidence type="ECO:0000269" key="3">
    <source>
    </source>
</evidence>
<evidence type="ECO:0000303" key="4">
    <source>
    </source>
</evidence>
<feature type="chain" id="PRO_0000342256" description="LL-diaminopimelate aminotransferase">
    <location>
        <begin position="1"/>
        <end position="410"/>
    </location>
</feature>
<feature type="binding site" evidence="1">
    <location>
        <position position="15"/>
    </location>
    <ligand>
        <name>substrate</name>
    </ligand>
</feature>
<feature type="binding site" evidence="1">
    <location>
        <position position="42"/>
    </location>
    <ligand>
        <name>substrate</name>
    </ligand>
</feature>
<feature type="binding site" evidence="1">
    <location>
        <position position="72"/>
    </location>
    <ligand>
        <name>pyridoxal 5'-phosphate</name>
        <dbReference type="ChEBI" id="CHEBI:597326"/>
    </ligand>
</feature>
<feature type="binding site" evidence="1">
    <location>
        <begin position="108"/>
        <end position="109"/>
    </location>
    <ligand>
        <name>pyridoxal 5'-phosphate</name>
        <dbReference type="ChEBI" id="CHEBI:597326"/>
    </ligand>
</feature>
<feature type="binding site" evidence="1">
    <location>
        <position position="109"/>
    </location>
    <ligand>
        <name>substrate</name>
    </ligand>
</feature>
<feature type="binding site" evidence="1">
    <location>
        <position position="132"/>
    </location>
    <ligand>
        <name>pyridoxal 5'-phosphate</name>
        <dbReference type="ChEBI" id="CHEBI:597326"/>
    </ligand>
</feature>
<feature type="binding site" evidence="1">
    <location>
        <position position="132"/>
    </location>
    <ligand>
        <name>substrate</name>
    </ligand>
</feature>
<feature type="binding site" evidence="1">
    <location>
        <position position="187"/>
    </location>
    <ligand>
        <name>pyridoxal 5'-phosphate</name>
        <dbReference type="ChEBI" id="CHEBI:597326"/>
    </ligand>
</feature>
<feature type="binding site" evidence="1">
    <location>
        <position position="187"/>
    </location>
    <ligand>
        <name>substrate</name>
    </ligand>
</feature>
<feature type="binding site" evidence="1">
    <location>
        <position position="218"/>
    </location>
    <ligand>
        <name>pyridoxal 5'-phosphate</name>
        <dbReference type="ChEBI" id="CHEBI:597326"/>
    </ligand>
</feature>
<feature type="binding site" evidence="1">
    <location>
        <begin position="246"/>
        <end position="248"/>
    </location>
    <ligand>
        <name>pyridoxal 5'-phosphate</name>
        <dbReference type="ChEBI" id="CHEBI:597326"/>
    </ligand>
</feature>
<feature type="binding site" evidence="1">
    <location>
        <position position="257"/>
    </location>
    <ligand>
        <name>pyridoxal 5'-phosphate</name>
        <dbReference type="ChEBI" id="CHEBI:597326"/>
    </ligand>
</feature>
<feature type="binding site" evidence="1">
    <location>
        <position position="292"/>
    </location>
    <ligand>
        <name>pyridoxal 5'-phosphate</name>
        <dbReference type="ChEBI" id="CHEBI:597326"/>
    </ligand>
</feature>
<feature type="binding site" evidence="1">
    <location>
        <position position="292"/>
    </location>
    <ligand>
        <name>substrate</name>
    </ligand>
</feature>
<feature type="binding site" evidence="1">
    <location>
        <position position="388"/>
    </location>
    <ligand>
        <name>substrate</name>
    </ligand>
</feature>
<feature type="modified residue" description="N6-(pyridoxal phosphate)lysine" evidence="1">
    <location>
        <position position="249"/>
    </location>
</feature>
<reference key="1">
    <citation type="journal article" date="1997" name="J. Bacteriol.">
        <title>Complete genome sequence of Methanobacterium thermoautotrophicum deltaH: functional analysis and comparative genomics.</title>
        <authorList>
            <person name="Smith D.R."/>
            <person name="Doucette-Stamm L.A."/>
            <person name="Deloughery C."/>
            <person name="Lee H.-M."/>
            <person name="Dubois J."/>
            <person name="Aldredge T."/>
            <person name="Bashirzadeh R."/>
            <person name="Blakely D."/>
            <person name="Cook R."/>
            <person name="Gilbert K."/>
            <person name="Harrison D."/>
            <person name="Hoang L."/>
            <person name="Keagle P."/>
            <person name="Lumm W."/>
            <person name="Pothier B."/>
            <person name="Qiu D."/>
            <person name="Spadafora R."/>
            <person name="Vicare R."/>
            <person name="Wang Y."/>
            <person name="Wierzbowski J."/>
            <person name="Gibson R."/>
            <person name="Jiwani N."/>
            <person name="Caruso A."/>
            <person name="Bush D."/>
            <person name="Safer H."/>
            <person name="Patwell D."/>
            <person name="Prabhakar S."/>
            <person name="McDougall S."/>
            <person name="Shimer G."/>
            <person name="Goyal A."/>
            <person name="Pietrovski S."/>
            <person name="Church G.M."/>
            <person name="Daniels C.J."/>
            <person name="Mao J.-I."/>
            <person name="Rice P."/>
            <person name="Noelling J."/>
            <person name="Reeve J.N."/>
        </authorList>
    </citation>
    <scope>NUCLEOTIDE SEQUENCE [LARGE SCALE GENOMIC DNA]</scope>
    <source>
        <strain>ATCC 29096 / DSM 1053 / JCM 10044 / NBRC 100330 / Delta H</strain>
    </source>
</reference>
<reference key="2">
    <citation type="journal article" date="2008" name="FEBS Lett.">
        <title>Methanogens with pseudomurein use diaminopimelate aminotransferase in lysine biosynthesis.</title>
        <authorList>
            <person name="Graham D.E."/>
            <person name="Huse H.K."/>
        </authorList>
    </citation>
    <scope>FUNCTION</scope>
    <scope>CATALYTIC ACTIVITY</scope>
    <scope>SUBSTRATE SPECIFICITY</scope>
    <scope>COFACTOR</scope>
    <scope>PATHWAY</scope>
    <source>
        <strain>ATCC 29096 / DSM 1053 / JCM 10044 / NBRC 100330 / Delta H</strain>
    </source>
</reference>
<reference key="3">
    <citation type="journal article" date="2008" name="J. Bacteriol.">
        <title>Biochemical and phylogenetic characterization of a novel diaminopimelate biosynthesis pathway in prokaryotes identifies a diverged form of LL-diaminopimelate aminotransferase.</title>
        <authorList>
            <person name="Hudson A.O."/>
            <person name="Gilvarg C."/>
            <person name="Leustek T."/>
        </authorList>
    </citation>
    <scope>FUNCTION</scope>
    <scope>CATALYTIC ACTIVITY</scope>
    <scope>BIOPHYSICOCHEMICAL PROPERTIES</scope>
    <scope>SUBSTRATE SPECIFICITY</scope>
    <scope>PATHWAY</scope>
    <source>
        <strain>ATCC 29096 / DSM 1053 / JCM 10044 / NBRC 100330 / Delta H</strain>
    </source>
</reference>
<sequence>MVTVNENYLLLKSSYIFSEINRRVEEFQRKNPDADIIRMGIGDVTRPLPEAVVEAFHRAVDEMAEEETFRGYGPEQGYPFLREAIAENDYASRGVDITADEIFISDGAKCDTGNIQEIFGLDNVVAVTDPVYPVYVESNVMAGRAGPADDDGRYSGLVYLPCTEENSFIPSLPEERVDLIYLCYPNNPTGTTLTEKQLAEWVDYARDSGSLILFDAAYEAYIQEDGIPHSIYEVEGAREVAIEFRSFSKNAGFTGTRCAFTVVPEELEVPDSSGRMHSVRELWNRRQTTKFNGVSYPVQRAAEAVYTPEGQREIRESIDYYMENARIIRESLERAGLRYYGGVNAPYIWIRTPEGMDSWQFFDTLLNDAEVVGTPGSGFGPSGEGYFRLTAFNSFRNTVKAMERISELSF</sequence>
<proteinExistence type="evidence at protein level"/>
<gene>
    <name evidence="1" type="primary">dapL</name>
    <name type="ordered locus">MTH_52</name>
</gene>
<accession>O26158</accession>
<organism>
    <name type="scientific">Methanothermobacter thermautotrophicus (strain ATCC 29096 / DSM 1053 / JCM 10044 / NBRC 100330 / Delta H)</name>
    <name type="common">Methanobacterium thermoautotrophicum</name>
    <dbReference type="NCBI Taxonomy" id="187420"/>
    <lineage>
        <taxon>Archaea</taxon>
        <taxon>Methanobacteriati</taxon>
        <taxon>Methanobacteriota</taxon>
        <taxon>Methanomada group</taxon>
        <taxon>Methanobacteria</taxon>
        <taxon>Methanobacteriales</taxon>
        <taxon>Methanobacteriaceae</taxon>
        <taxon>Methanothermobacter</taxon>
    </lineage>
</organism>
<comment type="function">
    <text evidence="2 3">Involved in the synthesis of meso-diaminopimelate (m-DAP or DL-DAP), required for both lysine and peptidoglycan biosynthesis. Catalyzes the direct conversion of tetrahydrodipicolinate to LL-diaminopimelate. Is also able to catalyze the reverse reaction in vitro, i.e. the transamination of LL-diaminopimelate with 2-oxoglutarate to produce 2-oxo-6-aminopimelate (in equilibrium with tetrahydrodipicolinate) and glutamate. Has maximal aminotransferase activity using 2-oxoglutarate as an amino group acceptor, and cannot use oxaloacetate instead of 2-oxoglutarate, although 2-oxoadipate can substitute with 21% relative activity. Cannot use m-DAP, lysine or ornithine as the amino-group donor, when using 2-oxoglutarate as the amino-group acceptor.</text>
</comment>
<comment type="catalytic activity">
    <reaction evidence="1 2 3">
        <text>(2S,6S)-2,6-diaminopimelate + 2-oxoglutarate = (S)-2,3,4,5-tetrahydrodipicolinate + L-glutamate + H2O + H(+)</text>
        <dbReference type="Rhea" id="RHEA:23988"/>
        <dbReference type="ChEBI" id="CHEBI:15377"/>
        <dbReference type="ChEBI" id="CHEBI:15378"/>
        <dbReference type="ChEBI" id="CHEBI:16810"/>
        <dbReference type="ChEBI" id="CHEBI:16845"/>
        <dbReference type="ChEBI" id="CHEBI:29985"/>
        <dbReference type="ChEBI" id="CHEBI:57609"/>
        <dbReference type="EC" id="2.6.1.83"/>
    </reaction>
</comment>
<comment type="cofactor">
    <cofactor evidence="1 3">
        <name>pyridoxal 5'-phosphate</name>
        <dbReference type="ChEBI" id="CHEBI:597326"/>
    </cofactor>
</comment>
<comment type="biophysicochemical properties">
    <kinetics>
        <KM evidence="2">82 uM for LL-2,6-diaminopimelate</KM>
        <KM evidence="2">7.8 uM for L-2,3,4,5-tetrahydrodipicolinate</KM>
        <KM evidence="2">2.6 mM for 2-oxoglutarate</KM>
        <KM evidence="2">1.1 mM for glutamate</KM>
        <Vmax evidence="2">6.3 umol/min/mg enzyme for the forward reaction (tetrahydrodipicolinate synthesis)</Vmax>
        <Vmax evidence="2">0.1 umol/min/mg enzyme for the reverse reaction (LL-DAP synthesis)</Vmax>
    </kinetics>
</comment>
<comment type="pathway">
    <text evidence="1 2 3">Amino-acid biosynthesis; L-lysine biosynthesis via DAP pathway; LL-2,6-diaminopimelate from (S)-tetrahydrodipicolinate (aminotransferase route): step 1/1.</text>
</comment>
<comment type="subunit">
    <text evidence="1">Homodimer.</text>
</comment>
<comment type="similarity">
    <text evidence="1">Belongs to the class-I pyridoxal-phosphate-dependent aminotransferase family. LL-diaminopimelate aminotransferase subfamily.</text>
</comment>
<name>DAPAT_METTH</name>
<dbReference type="EC" id="2.6.1.83" evidence="1 2 3"/>
<dbReference type="EMBL" id="AE000666">
    <property type="protein sequence ID" value="AAB84559.1"/>
    <property type="molecule type" value="Genomic_DNA"/>
</dbReference>
<dbReference type="PIR" id="E69168">
    <property type="entry name" value="E69168"/>
</dbReference>
<dbReference type="SMR" id="O26158"/>
<dbReference type="FunCoup" id="O26158">
    <property type="interactions" value="74"/>
</dbReference>
<dbReference type="STRING" id="187420.MTH_52"/>
<dbReference type="PaxDb" id="187420-MTH_52"/>
<dbReference type="EnsemblBacteria" id="AAB84559">
    <property type="protein sequence ID" value="AAB84559"/>
    <property type="gene ID" value="MTH_52"/>
</dbReference>
<dbReference type="KEGG" id="mth:MTH_52"/>
<dbReference type="PATRIC" id="fig|187420.15.peg.50"/>
<dbReference type="HOGENOM" id="CLU_051433_0_0_2"/>
<dbReference type="InParanoid" id="O26158"/>
<dbReference type="BRENDA" id="2.6.1.83">
    <property type="organism ID" value="3256"/>
</dbReference>
<dbReference type="SABIO-RK" id="O26158"/>
<dbReference type="UniPathway" id="UPA00034">
    <property type="reaction ID" value="UER00466"/>
</dbReference>
<dbReference type="Proteomes" id="UP000005223">
    <property type="component" value="Chromosome"/>
</dbReference>
<dbReference type="GO" id="GO:0010285">
    <property type="term" value="F:L,L-diaminopimelate aminotransferase activity"/>
    <property type="evidence" value="ECO:0007669"/>
    <property type="project" value="UniProtKB-UniRule"/>
</dbReference>
<dbReference type="GO" id="GO:0030170">
    <property type="term" value="F:pyridoxal phosphate binding"/>
    <property type="evidence" value="ECO:0007669"/>
    <property type="project" value="UniProtKB-UniRule"/>
</dbReference>
<dbReference type="GO" id="GO:0033362">
    <property type="term" value="P:lysine biosynthetic process via diaminopimelate, diaminopimelate-aminotransferase pathway"/>
    <property type="evidence" value="ECO:0007669"/>
    <property type="project" value="UniProtKB-UniRule"/>
</dbReference>
<dbReference type="CDD" id="cd00609">
    <property type="entry name" value="AAT_like"/>
    <property type="match status" value="1"/>
</dbReference>
<dbReference type="FunFam" id="3.40.640.10:FF:000099">
    <property type="entry name" value="LL-diaminopimelate aminotransferase, chloroplastic"/>
    <property type="match status" value="1"/>
</dbReference>
<dbReference type="Gene3D" id="3.90.1150.10">
    <property type="entry name" value="Aspartate Aminotransferase, domain 1"/>
    <property type="match status" value="1"/>
</dbReference>
<dbReference type="Gene3D" id="3.40.640.10">
    <property type="entry name" value="Type I PLP-dependent aspartate aminotransferase-like (Major domain)"/>
    <property type="match status" value="1"/>
</dbReference>
<dbReference type="HAMAP" id="MF_01642">
    <property type="entry name" value="DapL_aminotrans_1"/>
    <property type="match status" value="1"/>
</dbReference>
<dbReference type="InterPro" id="IPR004839">
    <property type="entry name" value="Aminotransferase_I/II_large"/>
</dbReference>
<dbReference type="InterPro" id="IPR019942">
    <property type="entry name" value="DapL/ALD1"/>
</dbReference>
<dbReference type="InterPro" id="IPR015424">
    <property type="entry name" value="PyrdxlP-dep_Trfase"/>
</dbReference>
<dbReference type="InterPro" id="IPR015421">
    <property type="entry name" value="PyrdxlP-dep_Trfase_major"/>
</dbReference>
<dbReference type="InterPro" id="IPR015422">
    <property type="entry name" value="PyrdxlP-dep_Trfase_small"/>
</dbReference>
<dbReference type="NCBIfam" id="TIGR03542">
    <property type="entry name" value="DAPAT_plant"/>
    <property type="match status" value="1"/>
</dbReference>
<dbReference type="PANTHER" id="PTHR43144">
    <property type="entry name" value="AMINOTRANSFERASE"/>
    <property type="match status" value="1"/>
</dbReference>
<dbReference type="Pfam" id="PF00155">
    <property type="entry name" value="Aminotran_1_2"/>
    <property type="match status" value="2"/>
</dbReference>
<dbReference type="SUPFAM" id="SSF53383">
    <property type="entry name" value="PLP-dependent transferases"/>
    <property type="match status" value="1"/>
</dbReference>